<name>SCX8_RHOJU</name>
<sequence length="65" mass="7332">KEGYPMGRDGCKISCVINNSFCKVECQAKWRQSDGYCYFWGLSCYCTNLPEDAQVWDSSTNKCGG</sequence>
<proteinExistence type="evidence at transcript level"/>
<evidence type="ECO:0000250" key="1"/>
<evidence type="ECO:0000250" key="2">
    <source>
        <dbReference type="UniProtKB" id="P15226"/>
    </source>
</evidence>
<evidence type="ECO:0000250" key="3">
    <source>
        <dbReference type="UniProtKB" id="Q1I176"/>
    </source>
</evidence>
<evidence type="ECO:0000255" key="4"/>
<evidence type="ECO:0000255" key="5">
    <source>
        <dbReference type="PROSITE-ProRule" id="PRU01210"/>
    </source>
</evidence>
<evidence type="ECO:0000305" key="6"/>
<evidence type="ECO:0000305" key="7">
    <source>
    </source>
</evidence>
<evidence type="ECO:0000312" key="8">
    <source>
        <dbReference type="EMBL" id="ADV16820.1"/>
    </source>
</evidence>
<protein>
    <recommendedName>
        <fullName evidence="3">Putative beta-neurotoxin RjAa8</fullName>
    </recommendedName>
</protein>
<dbReference type="EMBL" id="HM233942">
    <property type="protein sequence ID" value="ADV16820.1"/>
    <property type="molecule type" value="mRNA"/>
</dbReference>
<dbReference type="SMR" id="E7CLN3"/>
<dbReference type="GO" id="GO:0005576">
    <property type="term" value="C:extracellular region"/>
    <property type="evidence" value="ECO:0007669"/>
    <property type="project" value="UniProtKB-SubCell"/>
</dbReference>
<dbReference type="GO" id="GO:0019871">
    <property type="term" value="F:sodium channel inhibitor activity"/>
    <property type="evidence" value="ECO:0007669"/>
    <property type="project" value="InterPro"/>
</dbReference>
<dbReference type="GO" id="GO:0090729">
    <property type="term" value="F:toxin activity"/>
    <property type="evidence" value="ECO:0007669"/>
    <property type="project" value="UniProtKB-KW"/>
</dbReference>
<dbReference type="GO" id="GO:0006952">
    <property type="term" value="P:defense response"/>
    <property type="evidence" value="ECO:0007669"/>
    <property type="project" value="InterPro"/>
</dbReference>
<dbReference type="CDD" id="cd23106">
    <property type="entry name" value="neurotoxins_LC_scorpion"/>
    <property type="match status" value="1"/>
</dbReference>
<dbReference type="FunFam" id="3.30.30.10:FF:000002">
    <property type="entry name" value="Alpha-like toxin BmK-M1"/>
    <property type="match status" value="1"/>
</dbReference>
<dbReference type="Gene3D" id="3.30.30.10">
    <property type="entry name" value="Knottin, scorpion toxin-like"/>
    <property type="match status" value="1"/>
</dbReference>
<dbReference type="InterPro" id="IPR044062">
    <property type="entry name" value="LCN-type_CS_alpha_beta_dom"/>
</dbReference>
<dbReference type="InterPro" id="IPR003614">
    <property type="entry name" value="Scorpion_toxin-like"/>
</dbReference>
<dbReference type="InterPro" id="IPR036574">
    <property type="entry name" value="Scorpion_toxin-like_sf"/>
</dbReference>
<dbReference type="InterPro" id="IPR018218">
    <property type="entry name" value="Scorpion_toxinL"/>
</dbReference>
<dbReference type="InterPro" id="IPR002061">
    <property type="entry name" value="Scorpion_toxinL/defensin"/>
</dbReference>
<dbReference type="Pfam" id="PF00537">
    <property type="entry name" value="Toxin_3"/>
    <property type="match status" value="1"/>
</dbReference>
<dbReference type="PRINTS" id="PR00285">
    <property type="entry name" value="SCORPNTOXIN"/>
</dbReference>
<dbReference type="SMART" id="SM00505">
    <property type="entry name" value="Knot1"/>
    <property type="match status" value="1"/>
</dbReference>
<dbReference type="SUPFAM" id="SSF57095">
    <property type="entry name" value="Scorpion toxin-like"/>
    <property type="match status" value="1"/>
</dbReference>
<dbReference type="PROSITE" id="PS51863">
    <property type="entry name" value="LCN_CSAB"/>
    <property type="match status" value="1"/>
</dbReference>
<accession>E7CLN3</accession>
<comment type="function">
    <text evidence="1">Beta toxins bind voltage-independently at site-4 of sodium channels (Nav) and shift the voltage of activation toward more negative potentials thereby affecting sodium channel activation and promoting spontaneous and repetitive firing.</text>
</comment>
<comment type="subcellular location">
    <subcellularLocation>
        <location evidence="2">Secreted</location>
    </subcellularLocation>
</comment>
<comment type="tissue specificity">
    <text evidence="7">Expressed by the venom gland.</text>
</comment>
<comment type="domain">
    <text evidence="6">Has the structural arrangement of an alpha-helix connected to antiparallel beta-sheets by disulfide bonds (CS-alpha/beta).</text>
</comment>
<comment type="similarity">
    <text evidence="4">Belongs to the long (4 C-C) scorpion toxin superfamily. Sodium channel inhibitor family. Beta subfamily.</text>
</comment>
<organism>
    <name type="scientific">Rhopalurus junceus</name>
    <name type="common">Caribbean blue scorpion</name>
    <dbReference type="NCBI Taxonomy" id="419285"/>
    <lineage>
        <taxon>Eukaryota</taxon>
        <taxon>Metazoa</taxon>
        <taxon>Ecdysozoa</taxon>
        <taxon>Arthropoda</taxon>
        <taxon>Chelicerata</taxon>
        <taxon>Arachnida</taxon>
        <taxon>Scorpiones</taxon>
        <taxon>Buthida</taxon>
        <taxon>Buthoidea</taxon>
        <taxon>Buthidae</taxon>
        <taxon>Rhopalurus</taxon>
    </lineage>
</organism>
<feature type="chain" id="PRO_0000413458" description="Putative beta-neurotoxin RjAa8">
    <location>
        <begin position="1"/>
        <end position="65"/>
    </location>
</feature>
<feature type="domain" description="LCN-type CS-alpha/beta" evidence="5">
    <location>
        <begin position="1"/>
        <end position="64"/>
    </location>
</feature>
<feature type="disulfide bond" evidence="5">
    <location>
        <begin position="11"/>
        <end position="63"/>
    </location>
</feature>
<feature type="disulfide bond" evidence="5">
    <location>
        <begin position="15"/>
        <end position="37"/>
    </location>
</feature>
<feature type="disulfide bond" evidence="5">
    <location>
        <begin position="22"/>
        <end position="44"/>
    </location>
</feature>
<feature type="disulfide bond" evidence="5">
    <location>
        <begin position="26"/>
        <end position="46"/>
    </location>
</feature>
<feature type="non-terminal residue" evidence="8">
    <location>
        <position position="1"/>
    </location>
</feature>
<keyword id="KW-1015">Disulfide bond</keyword>
<keyword id="KW-0872">Ion channel impairing toxin</keyword>
<keyword id="KW-0528">Neurotoxin</keyword>
<keyword id="KW-0964">Secreted</keyword>
<keyword id="KW-0800">Toxin</keyword>
<keyword id="KW-0738">Voltage-gated sodium channel impairing toxin</keyword>
<reference evidence="8" key="1">
    <citation type="journal article" date="2011" name="Toxicon">
        <title>Biochemical and molecular characterization of the venom from the Cuban scorpion Rhopalurus junceus.</title>
        <authorList>
            <person name="Garcia-Gomez B.I."/>
            <person name="Coronas F.I."/>
            <person name="Restano-Cassulini R."/>
            <person name="Rodriguez R.R."/>
            <person name="Possani L.D."/>
        </authorList>
    </citation>
    <scope>NUCLEOTIDE SEQUENCE [MRNA]</scope>
    <source>
        <tissue evidence="8">Venom gland</tissue>
    </source>
</reference>